<sequence>MARGNQREIARQKNMKKTQEISKGKRKEDSLTASQRKQRDSEIMQQKQKIANEKKSMQTTEK</sequence>
<organism>
    <name type="scientific">Mus musculus</name>
    <name type="common">Mouse</name>
    <dbReference type="NCBI Taxonomy" id="10090"/>
    <lineage>
        <taxon>Eukaryota</taxon>
        <taxon>Metazoa</taxon>
        <taxon>Chordata</taxon>
        <taxon>Craniata</taxon>
        <taxon>Vertebrata</taxon>
        <taxon>Euteleostomi</taxon>
        <taxon>Mammalia</taxon>
        <taxon>Eutheria</taxon>
        <taxon>Euarchontoglires</taxon>
        <taxon>Glires</taxon>
        <taxon>Rodentia</taxon>
        <taxon>Myomorpha</taxon>
        <taxon>Muroidea</taxon>
        <taxon>Muridae</taxon>
        <taxon>Murinae</taxon>
        <taxon>Mus</taxon>
        <taxon>Mus</taxon>
    </lineage>
</organism>
<name>SERF1_MOUSE</name>
<comment type="function">
    <text evidence="1">Positive regulator of amyloid protein aggregation and proteotoxicity (By similarity). Induces conformational changes in amyloid proteins, such as APP, HTT, and SNCA, driving them into compact formations preceding the formation of aggregates (By similarity).</text>
</comment>
<comment type="subunit">
    <text evidence="3">Interacts with SNCA; this interaction promotes the aggregation of SNCA.</text>
</comment>
<comment type="subcellular location">
    <subcellularLocation>
        <location evidence="3">Cytoplasm</location>
        <location evidence="3">Cytosol</location>
    </subcellularLocation>
    <subcellularLocation>
        <location evidence="1">Nucleus</location>
    </subcellularLocation>
</comment>
<comment type="tissue specificity">
    <text evidence="3 4">Expressed in brain (at protein level) (PubMed:31034892). Highly expressed in the testis (PubMed:9731538).</text>
</comment>
<comment type="similarity">
    <text evidence="5">Belongs to the SERF family.</text>
</comment>
<keyword id="KW-0963">Cytoplasm</keyword>
<keyword id="KW-0539">Nucleus</keyword>
<keyword id="KW-1185">Reference proteome</keyword>
<evidence type="ECO:0000250" key="1">
    <source>
        <dbReference type="UniProtKB" id="O75920"/>
    </source>
</evidence>
<evidence type="ECO:0000256" key="2">
    <source>
        <dbReference type="SAM" id="MobiDB-lite"/>
    </source>
</evidence>
<evidence type="ECO:0000269" key="3">
    <source>
    </source>
</evidence>
<evidence type="ECO:0000269" key="4">
    <source>
    </source>
</evidence>
<evidence type="ECO:0000305" key="5"/>
<accession>O88892</accession>
<feature type="chain" id="PRO_0000050711" description="Small EDRK-rich factor 1">
    <location>
        <begin position="1"/>
        <end position="62"/>
    </location>
</feature>
<feature type="region of interest" description="Disordered" evidence="2">
    <location>
        <begin position="1"/>
        <end position="62"/>
    </location>
</feature>
<feature type="compositionally biased region" description="Basic and acidic residues" evidence="2">
    <location>
        <begin position="1"/>
        <end position="30"/>
    </location>
</feature>
<feature type="compositionally biased region" description="Basic and acidic residues" evidence="2">
    <location>
        <begin position="50"/>
        <end position="62"/>
    </location>
</feature>
<dbReference type="EMBL" id="AF073517">
    <property type="protein sequence ID" value="AAC63514.1"/>
    <property type="molecule type" value="mRNA"/>
</dbReference>
<dbReference type="EMBL" id="AF131205">
    <property type="protein sequence ID" value="AAD56758.1"/>
    <property type="molecule type" value="Genomic_DNA"/>
</dbReference>
<dbReference type="EMBL" id="BC028510">
    <property type="protein sequence ID" value="AAH28510.1"/>
    <property type="molecule type" value="mRNA"/>
</dbReference>
<dbReference type="CCDS" id="CCDS36765.1"/>
<dbReference type="RefSeq" id="NP_035483.1">
    <property type="nucleotide sequence ID" value="NM_011353.3"/>
</dbReference>
<dbReference type="FunCoup" id="O88892">
    <property type="interactions" value="403"/>
</dbReference>
<dbReference type="iPTMnet" id="O88892"/>
<dbReference type="PhosphoSitePlus" id="O88892"/>
<dbReference type="PaxDb" id="10090-ENSMUSP00000022145"/>
<dbReference type="ProteomicsDB" id="256967"/>
<dbReference type="DNASU" id="20365"/>
<dbReference type="Ensembl" id="ENSMUST00000022145.15">
    <property type="protein sequence ID" value="ENSMUSP00000022145.9"/>
    <property type="gene ID" value="ENSMUSG00000021643.16"/>
</dbReference>
<dbReference type="Ensembl" id="ENSMUST00000129014.2">
    <property type="protein sequence ID" value="ENSMUSP00000121421.2"/>
    <property type="gene ID" value="ENSMUSG00000021643.16"/>
</dbReference>
<dbReference type="GeneID" id="20365"/>
<dbReference type="KEGG" id="mmu:20365"/>
<dbReference type="UCSC" id="uc007rqf.2">
    <property type="organism name" value="mouse"/>
</dbReference>
<dbReference type="AGR" id="MGI:1337114"/>
<dbReference type="CTD" id="20365"/>
<dbReference type="MGI" id="MGI:1337114">
    <property type="gene designation" value="Serf1"/>
</dbReference>
<dbReference type="VEuPathDB" id="HostDB:ENSMUSG00000021643"/>
<dbReference type="eggNOG" id="KOG4488">
    <property type="taxonomic scope" value="Eukaryota"/>
</dbReference>
<dbReference type="GeneTree" id="ENSGT00940000161793"/>
<dbReference type="HOGENOM" id="CLU_165034_1_1_1"/>
<dbReference type="InParanoid" id="O88892"/>
<dbReference type="OMA" id="NQGELAH"/>
<dbReference type="OrthoDB" id="18018at2759"/>
<dbReference type="PhylomeDB" id="O88892"/>
<dbReference type="TreeFam" id="TF330718"/>
<dbReference type="BioGRID-ORCS" id="20365">
    <property type="hits" value="0 hits in 74 CRISPR screens"/>
</dbReference>
<dbReference type="ChiTaRS" id="Serf1">
    <property type="organism name" value="mouse"/>
</dbReference>
<dbReference type="PRO" id="PR:O88892"/>
<dbReference type="Proteomes" id="UP000000589">
    <property type="component" value="Chromosome 13"/>
</dbReference>
<dbReference type="RNAct" id="O88892">
    <property type="molecule type" value="protein"/>
</dbReference>
<dbReference type="Bgee" id="ENSMUSG00000021643">
    <property type="expression patterns" value="Expressed in embryonic brain and 255 other cell types or tissues"/>
</dbReference>
<dbReference type="ExpressionAtlas" id="O88892">
    <property type="expression patterns" value="baseline and differential"/>
</dbReference>
<dbReference type="GO" id="GO:0005829">
    <property type="term" value="C:cytosol"/>
    <property type="evidence" value="ECO:0007669"/>
    <property type="project" value="UniProtKB-SubCell"/>
</dbReference>
<dbReference type="GO" id="GO:0005634">
    <property type="term" value="C:nucleus"/>
    <property type="evidence" value="ECO:0007669"/>
    <property type="project" value="UniProtKB-SubCell"/>
</dbReference>
<dbReference type="GO" id="GO:0032991">
    <property type="term" value="C:protein-containing complex"/>
    <property type="evidence" value="ECO:0007669"/>
    <property type="project" value="Ensembl"/>
</dbReference>
<dbReference type="GO" id="GO:1990000">
    <property type="term" value="P:amyloid fibril formation"/>
    <property type="evidence" value="ECO:0007669"/>
    <property type="project" value="Ensembl"/>
</dbReference>
<dbReference type="GO" id="GO:0031648">
    <property type="term" value="P:protein destabilization"/>
    <property type="evidence" value="ECO:0007669"/>
    <property type="project" value="Ensembl"/>
</dbReference>
<dbReference type="InterPro" id="IPR007513">
    <property type="entry name" value="SERF-like_N"/>
</dbReference>
<dbReference type="InterPro" id="IPR040211">
    <property type="entry name" value="SERF1/2-like"/>
</dbReference>
<dbReference type="PANTHER" id="PTHR13596">
    <property type="entry name" value="SMALL EDRK-RICH FACTOR 1"/>
    <property type="match status" value="1"/>
</dbReference>
<dbReference type="PANTHER" id="PTHR13596:SF1">
    <property type="entry name" value="SMALL EDRK-RICH FACTOR 1"/>
    <property type="match status" value="1"/>
</dbReference>
<dbReference type="Pfam" id="PF04419">
    <property type="entry name" value="SERF-like_N"/>
    <property type="match status" value="1"/>
</dbReference>
<proteinExistence type="evidence at protein level"/>
<protein>
    <recommendedName>
        <fullName>Small EDRK-rich factor 1</fullName>
    </recommendedName>
    <alternativeName>
        <fullName>Protein 4F5</fullName>
        <shortName>m4F5</shortName>
    </alternativeName>
</protein>
<reference key="1">
    <citation type="journal article" date="1998" name="Nat. Genet.">
        <title>Identification of a candidate modifying gene for spinal muscular atrophy by comparative genomics.</title>
        <authorList>
            <person name="Scharf J.M."/>
            <person name="Endrizzi M.G."/>
            <person name="Wetter A."/>
            <person name="Huang S."/>
            <person name="Thompson T.G."/>
            <person name="Zerres K."/>
            <person name="Dietrich W.F."/>
            <person name="Wirth B."/>
            <person name="Kunkel L.M."/>
        </authorList>
    </citation>
    <scope>NUCLEOTIDE SEQUENCE [MRNA]</scope>
    <scope>TISSUE SPECIFICITY</scope>
    <source>
        <strain>C57BL/6J</strain>
    </source>
</reference>
<reference key="2">
    <citation type="journal article" date="1999" name="Genomics">
        <title>Comparative sequence analysis of the mouse and human Lgn1/SMA interval.</title>
        <authorList>
            <person name="Endrizzi M."/>
            <person name="Huang S."/>
            <person name="Scharf J.M."/>
            <person name="Kelter A.R."/>
            <person name="Wirth B."/>
            <person name="Kunkel L.M."/>
            <person name="Miller W."/>
            <person name="Dietrich W.F."/>
        </authorList>
    </citation>
    <scope>NUCLEOTIDE SEQUENCE [GENOMIC DNA]</scope>
    <source>
        <strain>129/Sv</strain>
    </source>
</reference>
<reference key="3">
    <citation type="journal article" date="2004" name="Genome Res.">
        <title>The status, quality, and expansion of the NIH full-length cDNA project: the Mammalian Gene Collection (MGC).</title>
        <authorList>
            <consortium name="The MGC Project Team"/>
        </authorList>
    </citation>
    <scope>NUCLEOTIDE SEQUENCE [LARGE SCALE MRNA]</scope>
    <source>
        <tissue>Mammary gland</tissue>
    </source>
</reference>
<reference key="4">
    <citation type="journal article" date="2019" name="J. Mol. Biol.">
        <title>Increased Aggregation Tendency of Alpha-Synuclein in a Fully Disordered Protein Complex.</title>
        <authorList>
            <person name="Merle D.A."/>
            <person name="Witternigg A."/>
            <person name="Tam-Amersdorfer C."/>
            <person name="Hartlmueller C."/>
            <person name="Spreitzer E."/>
            <person name="Schrank E."/>
            <person name="Wagner-Lichtenegger S."/>
            <person name="Werzer O."/>
            <person name="Zangger K."/>
            <person name="Kungl A.J."/>
            <person name="Madl T."/>
            <person name="Meyer N.H."/>
            <person name="Falsone S.F."/>
        </authorList>
    </citation>
    <scope>INTERACTION WITH SNCA</scope>
    <scope>SUBCELLULAR LOCATION</scope>
    <scope>TISSUE SPECIFICITY</scope>
</reference>
<gene>
    <name type="primary">Serf1</name>
</gene>